<evidence type="ECO:0000250" key="1">
    <source>
        <dbReference type="UniProtKB" id="Q9H8T0"/>
    </source>
</evidence>
<evidence type="ECO:0000255" key="2">
    <source>
        <dbReference type="PROSITE-ProRule" id="PRU00388"/>
    </source>
</evidence>
<evidence type="ECO:0000256" key="3">
    <source>
        <dbReference type="SAM" id="MobiDB-lite"/>
    </source>
</evidence>
<evidence type="ECO:0000305" key="4"/>
<proteinExistence type="evidence at transcript level"/>
<accession>Q5RE48</accession>
<keyword id="KW-0053">Apoptosis</keyword>
<keyword id="KW-1003">Cell membrane</keyword>
<keyword id="KW-0963">Cytoplasm</keyword>
<keyword id="KW-0472">Membrane</keyword>
<keyword id="KW-0597">Phosphoprotein</keyword>
<keyword id="KW-0653">Protein transport</keyword>
<keyword id="KW-1185">Reference proteome</keyword>
<keyword id="KW-0813">Transport</keyword>
<feature type="chain" id="PRO_0000281865" description="AKT-interacting protein">
    <location>
        <begin position="1"/>
        <end position="293"/>
    </location>
</feature>
<feature type="domain" description="UBC core" evidence="2">
    <location>
        <begin position="74"/>
        <end position="222"/>
    </location>
</feature>
<feature type="region of interest" description="Disordered" evidence="3">
    <location>
        <begin position="1"/>
        <end position="63"/>
    </location>
</feature>
<feature type="region of interest" description="Disordered" evidence="3">
    <location>
        <begin position="253"/>
        <end position="293"/>
    </location>
</feature>
<feature type="compositionally biased region" description="Polar residues" evidence="3">
    <location>
        <begin position="1"/>
        <end position="11"/>
    </location>
</feature>
<feature type="compositionally biased region" description="Basic and acidic residues" evidence="3">
    <location>
        <begin position="14"/>
        <end position="23"/>
    </location>
</feature>
<feature type="compositionally biased region" description="Basic and acidic residues" evidence="3">
    <location>
        <begin position="253"/>
        <end position="265"/>
    </location>
</feature>
<feature type="modified residue" description="Phosphoserine" evidence="1">
    <location>
        <position position="30"/>
    </location>
</feature>
<sequence length="293" mass="33256">MNPFWSMSTSSVRKRSEGEEKTLTGDVKTSPPRTAPKKQLPSIPKNALPITKPTSPAPAAQSTNGTHASYGPFYLEYSLLAEFTLVVKQKLPGVYVQPSYRSALMWFGVIFIRHGLYQDGVFKFTVYIPDNYPDGDCPRLVFDIPVFHPLVDPTSGELDVKRAFAKWRRNHNHIWQVLMYARRVFYKIDTASPLNPEAAVLYEKDIQLFKSKVVDSVQVCTARLFDQPKIEDPYAISFSPWNPSVHDEAREKMLTQKKKPEEQHNKSVHVAGLSWVKPGSVQPFSKEEKTVAT</sequence>
<gene>
    <name type="primary">AKTIP</name>
    <name type="synonym">FTS</name>
</gene>
<reference key="1">
    <citation type="submission" date="2004-11" db="EMBL/GenBank/DDBJ databases">
        <authorList>
            <consortium name="The German cDNA consortium"/>
        </authorList>
    </citation>
    <scope>NUCLEOTIDE SEQUENCE [LARGE SCALE MRNA]</scope>
    <source>
        <tissue>Heart</tissue>
    </source>
</reference>
<name>AKTIP_PONAB</name>
<comment type="function">
    <text evidence="1">Component of the FTS/Hook/FHIP complex (FHF complex). The FHF complex may function to promote vesicle trafficking and/or fusion via the homotypic vesicular protein sorting complex (the HOPS complex). Regulates apoptosis by enhancing phosphorylation and activation of AKT1. Increases release of TNFSF6 via the AKT1/GSK3B/NFATC1 signaling cascade. FHF complex promotes the distribution of AP-4 complex to the perinuclear area of the cell.</text>
</comment>
<comment type="subunit">
    <text evidence="1">Component of the FTS/Hook/FHIP complex (FHF complex), composed of AKTIP/FTS, FHIP1B, and one or more members of the Hook family of proteins HOOK1, HOOK2, and HOOK3. Interacts directly with HOOK1, HOOK2 and HOOK3. The FHF complex associates with the homotypic vesicular sorting complex (the HOPS complex). Also interacts with AKT1. May interact with FHIP1A.</text>
</comment>
<comment type="subcellular location">
    <subcellularLocation>
        <location evidence="1">Cytoplasm</location>
    </subcellularLocation>
    <subcellularLocation>
        <location evidence="1">Cell membrane</location>
        <topology evidence="1">Peripheral membrane protein</topology>
    </subcellularLocation>
</comment>
<comment type="similarity">
    <text evidence="2">Belongs to the ubiquitin-conjugating enzyme family. FTS subfamily.</text>
</comment>
<comment type="caution">
    <text evidence="4">Lacks the conserved Cys residue necessary for ubiquitin-conjugating enzyme E2 activity.</text>
</comment>
<organism>
    <name type="scientific">Pongo abelii</name>
    <name type="common">Sumatran orangutan</name>
    <name type="synonym">Pongo pygmaeus abelii</name>
    <dbReference type="NCBI Taxonomy" id="9601"/>
    <lineage>
        <taxon>Eukaryota</taxon>
        <taxon>Metazoa</taxon>
        <taxon>Chordata</taxon>
        <taxon>Craniata</taxon>
        <taxon>Vertebrata</taxon>
        <taxon>Euteleostomi</taxon>
        <taxon>Mammalia</taxon>
        <taxon>Eutheria</taxon>
        <taxon>Euarchontoglires</taxon>
        <taxon>Primates</taxon>
        <taxon>Haplorrhini</taxon>
        <taxon>Catarrhini</taxon>
        <taxon>Hominidae</taxon>
        <taxon>Pongo</taxon>
    </lineage>
</organism>
<protein>
    <recommendedName>
        <fullName>AKT-interacting protein</fullName>
    </recommendedName>
    <alternativeName>
        <fullName>Fused toes protein homolog</fullName>
    </alternativeName>
</protein>
<dbReference type="EMBL" id="CR857690">
    <property type="protein sequence ID" value="CAH89959.1"/>
    <property type="molecule type" value="mRNA"/>
</dbReference>
<dbReference type="RefSeq" id="NP_001124921.1">
    <property type="nucleotide sequence ID" value="NM_001131449.1"/>
</dbReference>
<dbReference type="RefSeq" id="XP_009248991.1">
    <property type="nucleotide sequence ID" value="XM_009250716.4"/>
</dbReference>
<dbReference type="RefSeq" id="XP_009248992.1">
    <property type="nucleotide sequence ID" value="XM_009250717.4"/>
</dbReference>
<dbReference type="RefSeq" id="XP_009248993.1">
    <property type="nucleotide sequence ID" value="XM_009250718.1"/>
</dbReference>
<dbReference type="RefSeq" id="XP_024088770.1">
    <property type="nucleotide sequence ID" value="XM_024233002.3"/>
</dbReference>
<dbReference type="RefSeq" id="XP_024088771.1">
    <property type="nucleotide sequence ID" value="XM_024233003.3"/>
</dbReference>
<dbReference type="RefSeq" id="XP_024088772.1">
    <property type="nucleotide sequence ID" value="XM_024233004.3"/>
</dbReference>
<dbReference type="RefSeq" id="XP_024088773.1">
    <property type="nucleotide sequence ID" value="XM_024233005.3"/>
</dbReference>
<dbReference type="RefSeq" id="XP_054388996.1">
    <property type="nucleotide sequence ID" value="XM_054533021.2"/>
</dbReference>
<dbReference type="RefSeq" id="XP_054388997.1">
    <property type="nucleotide sequence ID" value="XM_054533022.2"/>
</dbReference>
<dbReference type="SMR" id="Q5RE48"/>
<dbReference type="FunCoup" id="Q5RE48">
    <property type="interactions" value="1676"/>
</dbReference>
<dbReference type="STRING" id="9601.ENSPPYP00000008302"/>
<dbReference type="Ensembl" id="ENSPPYT00000008642.2">
    <property type="protein sequence ID" value="ENSPPYP00000008302.1"/>
    <property type="gene ID" value="ENSPPYG00000007351.3"/>
</dbReference>
<dbReference type="GeneID" id="100171791"/>
<dbReference type="KEGG" id="pon:100171791"/>
<dbReference type="CTD" id="64400"/>
<dbReference type="eggNOG" id="KOG0429">
    <property type="taxonomic scope" value="Eukaryota"/>
</dbReference>
<dbReference type="GeneTree" id="ENSGT00390000010125"/>
<dbReference type="HOGENOM" id="CLU_083049_0_0_1"/>
<dbReference type="InParanoid" id="Q5RE48"/>
<dbReference type="OMA" id="WGFPEWR"/>
<dbReference type="OrthoDB" id="5596422at2759"/>
<dbReference type="TreeFam" id="TF314386"/>
<dbReference type="Proteomes" id="UP000001595">
    <property type="component" value="Chromosome 16"/>
</dbReference>
<dbReference type="GO" id="GO:0070695">
    <property type="term" value="C:FHF complex"/>
    <property type="evidence" value="ECO:0000250"/>
    <property type="project" value="UniProtKB"/>
</dbReference>
<dbReference type="GO" id="GO:0030897">
    <property type="term" value="C:HOPS complex"/>
    <property type="evidence" value="ECO:0007669"/>
    <property type="project" value="Ensembl"/>
</dbReference>
<dbReference type="GO" id="GO:0005886">
    <property type="term" value="C:plasma membrane"/>
    <property type="evidence" value="ECO:0007669"/>
    <property type="project" value="UniProtKB-SubCell"/>
</dbReference>
<dbReference type="GO" id="GO:0006915">
    <property type="term" value="P:apoptotic process"/>
    <property type="evidence" value="ECO:0007669"/>
    <property type="project" value="UniProtKB-KW"/>
</dbReference>
<dbReference type="GO" id="GO:0045022">
    <property type="term" value="P:early endosome to late endosome transport"/>
    <property type="evidence" value="ECO:0000250"/>
    <property type="project" value="UniProtKB"/>
</dbReference>
<dbReference type="GO" id="GO:0007032">
    <property type="term" value="P:endosome organization"/>
    <property type="evidence" value="ECO:0000250"/>
    <property type="project" value="UniProtKB"/>
</dbReference>
<dbReference type="GO" id="GO:0008333">
    <property type="term" value="P:endosome to lysosome transport"/>
    <property type="evidence" value="ECO:0000250"/>
    <property type="project" value="UniProtKB"/>
</dbReference>
<dbReference type="GO" id="GO:0007040">
    <property type="term" value="P:lysosome organization"/>
    <property type="evidence" value="ECO:0000250"/>
    <property type="project" value="UniProtKB"/>
</dbReference>
<dbReference type="GO" id="GO:1905719">
    <property type="term" value="P:protein localization to perinuclear region of cytoplasm"/>
    <property type="evidence" value="ECO:0000250"/>
    <property type="project" value="UniProtKB"/>
</dbReference>
<dbReference type="GO" id="GO:0015031">
    <property type="term" value="P:protein transport"/>
    <property type="evidence" value="ECO:0007669"/>
    <property type="project" value="UniProtKB-KW"/>
</dbReference>
<dbReference type="CDD" id="cd23814">
    <property type="entry name" value="UEV_AKTIP"/>
    <property type="match status" value="1"/>
</dbReference>
<dbReference type="FunFam" id="3.10.110.10:FF:000030">
    <property type="entry name" value="AKT-interacting protein-like isoform X2"/>
    <property type="match status" value="1"/>
</dbReference>
<dbReference type="Gene3D" id="3.10.110.10">
    <property type="entry name" value="Ubiquitin Conjugating Enzyme"/>
    <property type="match status" value="1"/>
</dbReference>
<dbReference type="InterPro" id="IPR050113">
    <property type="entry name" value="Ub_conjugating_enzyme"/>
</dbReference>
<dbReference type="InterPro" id="IPR000608">
    <property type="entry name" value="UBQ-conjugat_E2_core"/>
</dbReference>
<dbReference type="InterPro" id="IPR016135">
    <property type="entry name" value="UBQ-conjugating_enzyme/RWD"/>
</dbReference>
<dbReference type="PANTHER" id="PTHR24067">
    <property type="entry name" value="UBIQUITIN-CONJUGATING ENZYME E2"/>
    <property type="match status" value="1"/>
</dbReference>
<dbReference type="Pfam" id="PF00179">
    <property type="entry name" value="UQ_con"/>
    <property type="match status" value="1"/>
</dbReference>
<dbReference type="SMART" id="SM00212">
    <property type="entry name" value="UBCc"/>
    <property type="match status" value="1"/>
</dbReference>
<dbReference type="SUPFAM" id="SSF54495">
    <property type="entry name" value="UBC-like"/>
    <property type="match status" value="1"/>
</dbReference>
<dbReference type="PROSITE" id="PS50127">
    <property type="entry name" value="UBC_2"/>
    <property type="match status" value="1"/>
</dbReference>